<reference key="1">
    <citation type="submission" date="2007-03" db="EMBL/GenBank/DDBJ databases">
        <title>The NIAID influenza genome sequencing project.</title>
        <authorList>
            <person name="Ghedin E."/>
            <person name="Spiro D."/>
            <person name="Miller N."/>
            <person name="Zaborsky J."/>
            <person name="Feldblyum T."/>
            <person name="Subbu V."/>
            <person name="Shumway M."/>
            <person name="Sparenborg J."/>
            <person name="Groveman L."/>
            <person name="Halpin R."/>
            <person name="Sitz J."/>
            <person name="Koo H."/>
            <person name="Salzberg S.L."/>
            <person name="Webster R.G."/>
            <person name="Hoffmann E."/>
            <person name="Krauss S."/>
            <person name="Naeve C."/>
            <person name="Bao Y."/>
            <person name="Bolotov P."/>
            <person name="Dernovoy D."/>
            <person name="Kiryutin B."/>
            <person name="Lipman D.J."/>
            <person name="Tatusova T."/>
        </authorList>
    </citation>
    <scope>NUCLEOTIDE SEQUENCE [GENOMIC RNA]</scope>
</reference>
<reference key="2">
    <citation type="submission" date="2007-03" db="EMBL/GenBank/DDBJ databases">
        <authorList>
            <consortium name="The NIAID Influenza Genome Sequencing Consortium"/>
        </authorList>
    </citation>
    <scope>NUCLEOTIDE SEQUENCE [GENOMIC RNA]</scope>
</reference>
<organismHost>
    <name type="scientific">Aves</name>
    <dbReference type="NCBI Taxonomy" id="8782"/>
</organismHost>
<organismHost>
    <name type="scientific">Homo sapiens</name>
    <name type="common">Human</name>
    <dbReference type="NCBI Taxonomy" id="9606"/>
</organismHost>
<organismHost>
    <name type="scientific">Sus scrofa</name>
    <name type="common">Pig</name>
    <dbReference type="NCBI Taxonomy" id="9823"/>
</organismHost>
<keyword id="KW-0025">Alternative splicing</keyword>
<keyword id="KW-1262">Eukaryotic host gene expression shutoff by virus</keyword>
<keyword id="KW-1035">Host cytoplasm</keyword>
<keyword id="KW-1190">Host gene expression shutoff by virus</keyword>
<keyword id="KW-1192">Host mRNA suppression by virus</keyword>
<keyword id="KW-1048">Host nucleus</keyword>
<keyword id="KW-0945">Host-virus interaction</keyword>
<keyword id="KW-1090">Inhibition of host innate immune response by virus</keyword>
<keyword id="KW-1114">Inhibition of host interferon signaling pathway by virus</keyword>
<keyword id="KW-1102">Inhibition of host PKR by virus</keyword>
<keyword id="KW-1103">Inhibition of host pre-mRNA processing by virus</keyword>
<keyword id="KW-1088">Inhibition of host RIG-I by virus</keyword>
<keyword id="KW-1113">Inhibition of host RLR pathway by virus</keyword>
<keyword id="KW-0922">Interferon antiviral system evasion</keyword>
<keyword id="KW-0694">RNA-binding</keyword>
<keyword id="KW-0832">Ubl conjugation</keyword>
<keyword id="KW-0899">Viral immunoevasion</keyword>
<comment type="function">
    <text evidence="1">Inhibits post-transcriptional processing of cellular pre-mRNA, by binding and inhibiting two cellular proteins that are required for the 3'-end processing of cellular pre-mRNAs: the 30 kDa cleavage and polyadenylation specificity factor/CPSF4 and the poly(A)-binding protein 2/PABPN1. In turn, unprocessed 3' end pre-mRNAs accumulate in the host nucleus and are no longer exported to the cytoplasm. Cellular protein synthesis is thereby shut off very early after virus infection. Viral protein synthesis is not affected by the inhibition of the cellular 3' end processing machinery because the poly(A) tails of viral mRNAs are produced by the viral polymerase through a stuttering mechanism. Prevents the establishment of the cellular antiviral state by inhibiting TRIM25-mediated RIGI ubiquitination, which normally triggers the antiviral transduction signal that leads to the activation of type I IFN genes by transcription factors IRF3 and IRF7. Also binds poly(A) and U6 snRNA. Inhibits the integrated stress response (ISR) in the infected cell by blocking dsRNA binding by EIF2AK2/PKR and further phosphorylation of EIF2S1/EIF-2ALPHA. Stress granule formation is thus inhibited, which allows protein synthesis and viral replication.</text>
</comment>
<comment type="subunit">
    <text evidence="1">Homodimer. Interacts with host TRIM25 (via coiled coil); this interaction specifically inhibits TRIM25 multimerization and TRIM25-mediated RIGI CARD ubiquitination. Interacts with human EIF2AK2/PKR, CPSF4, IVNS1ABP and PABPN1.</text>
</comment>
<comment type="subcellular location">
    <subcellularLocation>
        <location evidence="1">Host nucleus</location>
    </subcellularLocation>
    <subcellularLocation>
        <location evidence="1">Host cytoplasm</location>
    </subcellularLocation>
    <text evidence="1">In uninfected, transfected cells, NS1 is localized in the nucleus. Only in virus infected cells, the nuclear export signal is unveiled, presumably by a viral protein, and a fraction of NS1 is exported in the cytoplasm.</text>
</comment>
<comment type="alternative products">
    <event type="alternative splicing"/>
    <isoform>
        <id>A4GCJ2-1</id>
        <name>NS1</name>
        <sequence type="displayed"/>
    </isoform>
    <isoform>
        <id>A4GCJ1-1</id>
        <name>NEP</name>
        <name>NS2</name>
        <sequence type="external"/>
    </isoform>
</comment>
<comment type="domain">
    <text evidence="1">The dsRNA-binding region is required for suppression of RNA silencing.</text>
</comment>
<comment type="PTM">
    <text evidence="1">Upon interferon induction, ISGylated via host HERC5; this results in the impairment of NS1 interaction with RNA targets due to its inability to form homodimers and to interact with host EIF2AK2/PKR.</text>
</comment>
<comment type="similarity">
    <text evidence="1">Belongs to the influenza A viruses NS1 family.</text>
</comment>
<sequence length="230" mass="25912">MDPNTVSSFQVDCFLWHVRKRVADQELGDAPFLDRLRRDQKSLRGRGSTLGLDIETATRAGKQIVERILKEESDEALKMTMASVPASRYLTDMTLEEMSRDWSMLIPKQKVAGPLCIRMDQAIMDKNIILKANFSVIFDRLETLILLRAFTEEGAIVGEISPLPSLPGHTDEDVKNAVGVLIGGLEWNDNTVRVSETLQRFAWRSSNENGRPPLTPKQKREMAGTIRSEV</sequence>
<name>NS1_I36A0</name>
<proteinExistence type="inferred from homology"/>
<evidence type="ECO:0000255" key="1">
    <source>
        <dbReference type="HAMAP-Rule" id="MF_04066"/>
    </source>
</evidence>
<evidence type="ECO:0000256" key="2">
    <source>
        <dbReference type="SAM" id="MobiDB-lite"/>
    </source>
</evidence>
<protein>
    <recommendedName>
        <fullName evidence="1">Non-structural protein 1</fullName>
        <shortName evidence="1">NS1</shortName>
    </recommendedName>
    <alternativeName>
        <fullName evidence="1">NS1A</fullName>
    </alternativeName>
</protein>
<organism>
    <name type="scientific">Influenza A virus (strain A/Henry/1936 H1N1)</name>
    <dbReference type="NCBI Taxonomy" id="425562"/>
    <lineage>
        <taxon>Viruses</taxon>
        <taxon>Riboviria</taxon>
        <taxon>Orthornavirae</taxon>
        <taxon>Negarnaviricota</taxon>
        <taxon>Polyploviricotina</taxon>
        <taxon>Insthoviricetes</taxon>
        <taxon>Articulavirales</taxon>
        <taxon>Orthomyxoviridae</taxon>
        <taxon>Alphainfluenzavirus</taxon>
        <taxon>Alphainfluenzavirus influenzae</taxon>
        <taxon>Influenza A virus</taxon>
    </lineage>
</organism>
<dbReference type="EMBL" id="CY020449">
    <property type="protein sequence ID" value="ABO38356.1"/>
    <property type="molecule type" value="Viral_cRNA"/>
</dbReference>
<dbReference type="SMR" id="A4GCJ2"/>
<dbReference type="Proteomes" id="UP000008213">
    <property type="component" value="Genome"/>
</dbReference>
<dbReference type="GO" id="GO:0030430">
    <property type="term" value="C:host cell cytoplasm"/>
    <property type="evidence" value="ECO:0007669"/>
    <property type="project" value="UniProtKB-SubCell"/>
</dbReference>
<dbReference type="GO" id="GO:0042025">
    <property type="term" value="C:host cell nucleus"/>
    <property type="evidence" value="ECO:0007669"/>
    <property type="project" value="UniProtKB-SubCell"/>
</dbReference>
<dbReference type="GO" id="GO:0030291">
    <property type="term" value="F:protein serine/threonine kinase inhibitor activity"/>
    <property type="evidence" value="ECO:0007669"/>
    <property type="project" value="UniProtKB-KW"/>
</dbReference>
<dbReference type="GO" id="GO:0003723">
    <property type="term" value="F:RNA binding"/>
    <property type="evidence" value="ECO:0007669"/>
    <property type="project" value="UniProtKB-KW"/>
</dbReference>
<dbReference type="GO" id="GO:0039540">
    <property type="term" value="P:symbiont-mediated suppression of host cytoplasmic pattern recognition receptor signaling pathway via inhibition of RIG-I activity"/>
    <property type="evidence" value="ECO:0007669"/>
    <property type="project" value="UniProtKB-KW"/>
</dbReference>
<dbReference type="GO" id="GO:0039657">
    <property type="term" value="P:symbiont-mediated suppression of host gene expression"/>
    <property type="evidence" value="ECO:0007669"/>
    <property type="project" value="UniProtKB-KW"/>
</dbReference>
<dbReference type="GO" id="GO:0039524">
    <property type="term" value="P:symbiont-mediated suppression of host mRNA processing"/>
    <property type="evidence" value="ECO:0007669"/>
    <property type="project" value="UniProtKB-KW"/>
</dbReference>
<dbReference type="GO" id="GO:0039580">
    <property type="term" value="P:symbiont-mediated suppression of host PKR/eIFalpha signaling"/>
    <property type="evidence" value="ECO:0007669"/>
    <property type="project" value="UniProtKB-KW"/>
</dbReference>
<dbReference type="GO" id="GO:0039502">
    <property type="term" value="P:symbiont-mediated suppression of host type I interferon-mediated signaling pathway"/>
    <property type="evidence" value="ECO:0007669"/>
    <property type="project" value="UniProtKB-KW"/>
</dbReference>
<dbReference type="FunFam" id="1.10.287.10:FF:000001">
    <property type="entry name" value="Non-structural protein 1"/>
    <property type="match status" value="1"/>
</dbReference>
<dbReference type="FunFam" id="3.30.420.330:FF:000001">
    <property type="entry name" value="Non-structural protein 1"/>
    <property type="match status" value="1"/>
</dbReference>
<dbReference type="Gene3D" id="3.30.420.330">
    <property type="entry name" value="Influenza virus non-structural protein, effector domain"/>
    <property type="match status" value="1"/>
</dbReference>
<dbReference type="Gene3D" id="1.10.287.10">
    <property type="entry name" value="S15/NS1, RNA-binding"/>
    <property type="match status" value="1"/>
</dbReference>
<dbReference type="HAMAP" id="MF_04066">
    <property type="entry name" value="INFV_NS1"/>
    <property type="match status" value="1"/>
</dbReference>
<dbReference type="InterPro" id="IPR004208">
    <property type="entry name" value="NS1"/>
</dbReference>
<dbReference type="InterPro" id="IPR000256">
    <property type="entry name" value="NS1A"/>
</dbReference>
<dbReference type="InterPro" id="IPR038064">
    <property type="entry name" value="NS1A_effect_dom-like_sf"/>
</dbReference>
<dbReference type="InterPro" id="IPR009068">
    <property type="entry name" value="uS15_NS1_RNA-bd_sf"/>
</dbReference>
<dbReference type="Pfam" id="PF00600">
    <property type="entry name" value="Flu_NS1"/>
    <property type="match status" value="1"/>
</dbReference>
<dbReference type="SUPFAM" id="SSF143021">
    <property type="entry name" value="Ns1 effector domain-like"/>
    <property type="match status" value="1"/>
</dbReference>
<dbReference type="SUPFAM" id="SSF47060">
    <property type="entry name" value="S15/NS1 RNA-binding domain"/>
    <property type="match status" value="1"/>
</dbReference>
<accession>A4GCJ2</accession>
<gene>
    <name evidence="1" type="primary">NS</name>
</gene>
<feature type="chain" id="PRO_0000372981" description="Non-structural protein 1">
    <location>
        <begin position="1"/>
        <end position="230"/>
    </location>
</feature>
<feature type="region of interest" description="RNA-binding and homodimerization" evidence="1">
    <location>
        <begin position="1"/>
        <end position="73"/>
    </location>
</feature>
<feature type="region of interest" description="CPSF4-binding" evidence="1">
    <location>
        <begin position="180"/>
        <end position="215"/>
    </location>
</feature>
<feature type="region of interest" description="Disordered" evidence="2">
    <location>
        <begin position="205"/>
        <end position="230"/>
    </location>
</feature>
<feature type="region of interest" description="PABPN1-binding" evidence="1">
    <location>
        <begin position="223"/>
        <end position="230"/>
    </location>
</feature>
<feature type="short sequence motif" description="Nuclear localization signal" evidence="1">
    <location>
        <begin position="34"/>
        <end position="38"/>
    </location>
</feature>
<feature type="short sequence motif" description="Nuclear export signal" evidence="1">
    <location>
        <begin position="137"/>
        <end position="146"/>
    </location>
</feature>
<feature type="compositionally biased region" description="Basic and acidic residues" evidence="2">
    <location>
        <begin position="218"/>
        <end position="230"/>
    </location>
</feature>